<feature type="chain" id="PRO_0000219034" description="Uncharacterized NOP5 family protein MJ0694">
    <location>
        <begin position="1"/>
        <end position="414"/>
    </location>
</feature>
<feature type="domain" description="Nop" evidence="1">
    <location>
        <begin position="246"/>
        <end position="360"/>
    </location>
</feature>
<feature type="region of interest" description="Disordered" evidence="2">
    <location>
        <begin position="358"/>
        <end position="414"/>
    </location>
</feature>
<feature type="compositionally biased region" description="Basic residues" evidence="2">
    <location>
        <begin position="361"/>
        <end position="414"/>
    </location>
</feature>
<feature type="strand" evidence="4">
    <location>
        <begin position="2"/>
        <end position="7"/>
    </location>
</feature>
<feature type="strand" evidence="4">
    <location>
        <begin position="10"/>
        <end position="15"/>
    </location>
</feature>
<feature type="helix" evidence="4">
    <location>
        <begin position="23"/>
        <end position="25"/>
    </location>
</feature>
<feature type="strand" evidence="4">
    <location>
        <begin position="28"/>
        <end position="31"/>
    </location>
</feature>
<feature type="helix" evidence="4">
    <location>
        <begin position="34"/>
        <end position="36"/>
    </location>
</feature>
<feature type="helix" evidence="4">
    <location>
        <begin position="37"/>
        <end position="46"/>
    </location>
</feature>
<feature type="helix" evidence="4">
    <location>
        <begin position="48"/>
        <end position="59"/>
    </location>
</feature>
<feature type="strand" evidence="4">
    <location>
        <begin position="63"/>
        <end position="65"/>
    </location>
</feature>
<feature type="helix" evidence="4">
    <location>
        <begin position="66"/>
        <end position="68"/>
    </location>
</feature>
<feature type="helix" evidence="4">
    <location>
        <begin position="74"/>
        <end position="81"/>
    </location>
</feature>
<feature type="helix" evidence="4">
    <location>
        <begin position="83"/>
        <end position="89"/>
    </location>
</feature>
<feature type="helix" evidence="4">
    <location>
        <begin position="96"/>
        <end position="117"/>
    </location>
</feature>
<dbReference type="EMBL" id="L77117">
    <property type="protein sequence ID" value="AAB98689.1"/>
    <property type="molecule type" value="Genomic_DNA"/>
</dbReference>
<dbReference type="PIR" id="F64386">
    <property type="entry name" value="F64386"/>
</dbReference>
<dbReference type="RefSeq" id="WP_010870199.1">
    <property type="nucleotide sequence ID" value="NC_000909.1"/>
</dbReference>
<dbReference type="PDB" id="3T7Z">
    <property type="method" value="X-ray"/>
    <property type="resolution" value="1.70 A"/>
    <property type="chains" value="A=1-119"/>
</dbReference>
<dbReference type="PDBsum" id="3T7Z"/>
<dbReference type="SMR" id="Q58105"/>
<dbReference type="FunCoup" id="Q58105">
    <property type="interactions" value="181"/>
</dbReference>
<dbReference type="IntAct" id="Q58105">
    <property type="interactions" value="2"/>
</dbReference>
<dbReference type="STRING" id="243232.MJ_0694"/>
<dbReference type="PaxDb" id="243232-MJ_0694"/>
<dbReference type="EnsemblBacteria" id="AAB98689">
    <property type="protein sequence ID" value="AAB98689"/>
    <property type="gene ID" value="MJ_0694"/>
</dbReference>
<dbReference type="GeneID" id="1451561"/>
<dbReference type="KEGG" id="mja:MJ_0694"/>
<dbReference type="eggNOG" id="arCOG01923">
    <property type="taxonomic scope" value="Archaea"/>
</dbReference>
<dbReference type="HOGENOM" id="CLU_015495_1_0_2"/>
<dbReference type="InParanoid" id="Q58105"/>
<dbReference type="OrthoDB" id="11877at2157"/>
<dbReference type="PhylomeDB" id="Q58105"/>
<dbReference type="EvolutionaryTrace" id="Q58105"/>
<dbReference type="Proteomes" id="UP000000805">
    <property type="component" value="Chromosome"/>
</dbReference>
<dbReference type="GO" id="GO:0031428">
    <property type="term" value="C:box C/D methylation guide snoRNP complex"/>
    <property type="evidence" value="ECO:0000318"/>
    <property type="project" value="GO_Central"/>
</dbReference>
<dbReference type="GO" id="GO:0030515">
    <property type="term" value="F:snoRNA binding"/>
    <property type="evidence" value="ECO:0000318"/>
    <property type="project" value="GO_Central"/>
</dbReference>
<dbReference type="FunFam" id="1.10.246.90:FF:000007">
    <property type="entry name" value="Pre mRNA splicing protein"/>
    <property type="match status" value="1"/>
</dbReference>
<dbReference type="Gene3D" id="1.10.150.460">
    <property type="match status" value="1"/>
</dbReference>
<dbReference type="Gene3D" id="3.30.420.220">
    <property type="match status" value="1"/>
</dbReference>
<dbReference type="Gene3D" id="1.10.287.660">
    <property type="entry name" value="Helix hairpin bin"/>
    <property type="match status" value="1"/>
</dbReference>
<dbReference type="Gene3D" id="1.10.246.90">
    <property type="entry name" value="Nop domain"/>
    <property type="match status" value="1"/>
</dbReference>
<dbReference type="InterPro" id="IPR029012">
    <property type="entry name" value="Helix_hairpin_bin_sf"/>
</dbReference>
<dbReference type="InterPro" id="IPR048895">
    <property type="entry name" value="MJ0694-like_N"/>
</dbReference>
<dbReference type="InterPro" id="IPR045056">
    <property type="entry name" value="Nop56/Nop58"/>
</dbReference>
<dbReference type="InterPro" id="IPR047099">
    <property type="entry name" value="Nop5_N_sf"/>
</dbReference>
<dbReference type="InterPro" id="IPR042239">
    <property type="entry name" value="Nop_C"/>
</dbReference>
<dbReference type="InterPro" id="IPR002687">
    <property type="entry name" value="Nop_dom"/>
</dbReference>
<dbReference type="InterPro" id="IPR036070">
    <property type="entry name" value="Nop_dom_sf"/>
</dbReference>
<dbReference type="InterPro" id="IPR012976">
    <property type="entry name" value="NOSIC"/>
</dbReference>
<dbReference type="NCBIfam" id="NF011121">
    <property type="entry name" value="PRK14552.1"/>
    <property type="match status" value="1"/>
</dbReference>
<dbReference type="PANTHER" id="PTHR10894">
    <property type="entry name" value="NUCLEOLAR PROTEIN 5 NUCLEOLAR PROTEIN NOP5 NOP58"/>
    <property type="match status" value="1"/>
</dbReference>
<dbReference type="PANTHER" id="PTHR10894:SF0">
    <property type="entry name" value="NUCLEOLAR PROTEIN 56"/>
    <property type="match status" value="1"/>
</dbReference>
<dbReference type="Pfam" id="PF01798">
    <property type="entry name" value="Nop"/>
    <property type="match status" value="1"/>
</dbReference>
<dbReference type="Pfam" id="PF21667">
    <property type="entry name" value="Nop5_N"/>
    <property type="match status" value="1"/>
</dbReference>
<dbReference type="SMART" id="SM00931">
    <property type="entry name" value="NOSIC"/>
    <property type="match status" value="1"/>
</dbReference>
<dbReference type="SUPFAM" id="SSF89124">
    <property type="entry name" value="Nop domain"/>
    <property type="match status" value="1"/>
</dbReference>
<dbReference type="PROSITE" id="PS51358">
    <property type="entry name" value="NOP"/>
    <property type="match status" value="1"/>
</dbReference>
<organism>
    <name type="scientific">Methanocaldococcus jannaschii (strain ATCC 43067 / DSM 2661 / JAL-1 / JCM 10045 / NBRC 100440)</name>
    <name type="common">Methanococcus jannaschii</name>
    <dbReference type="NCBI Taxonomy" id="243232"/>
    <lineage>
        <taxon>Archaea</taxon>
        <taxon>Methanobacteriati</taxon>
        <taxon>Methanobacteriota</taxon>
        <taxon>Methanomada group</taxon>
        <taxon>Methanococci</taxon>
        <taxon>Methanococcales</taxon>
        <taxon>Methanocaldococcaceae</taxon>
        <taxon>Methanocaldococcus</taxon>
    </lineage>
</organism>
<comment type="interaction">
    <interactant intactId="EBI-2944259">
        <id>Q58105</id>
    </interactant>
    <interactant intactId="EBI-2944269">
        <id>P54066</id>
        <label>rpl7ae</label>
    </interactant>
    <organismsDiffer>false</organismsDiffer>
    <experiments>4</experiments>
</comment>
<comment type="similarity">
    <text evidence="3">Belongs to the NOP5/NOP56 family.</text>
</comment>
<accession>Q58105</accession>
<keyword id="KW-0002">3D-structure</keyword>
<keyword id="KW-1185">Reference proteome</keyword>
<evidence type="ECO:0000255" key="1">
    <source>
        <dbReference type="PROSITE-ProRule" id="PRU00690"/>
    </source>
</evidence>
<evidence type="ECO:0000256" key="2">
    <source>
        <dbReference type="SAM" id="MobiDB-lite"/>
    </source>
</evidence>
<evidence type="ECO:0000305" key="3"/>
<evidence type="ECO:0007829" key="4">
    <source>
        <dbReference type="PDB" id="3T7Z"/>
    </source>
</evidence>
<sequence>MIYVTFTPYGAFGVKDNKEVSGLEDIEYKKLFNEEEIPDIMFKLKTQPNKIADELKEEWGDEIKLETLSTEPFNIGEFLRNNLFKVGKELGYFNNYDEFRKKMHYWSTELTKKVIKSYAQQKDKIIIQVAEAISDLDKTLNLLSERLREWYSLYFPELDHLVNKHEVYANLITKLGKRKNFTKSQLKKILPSKLAGKIAEAAKNSMGGELEDYDLDVIVKFAEEINHLYEKRKELYNYLEKLMNEEAPNITKLAGVSLGARLIGLAGGLEKLAKMPASTIQVLGAEKALFAHLRMGVEPPKHGIIYNHPLIQGSPHWQRGKIARALACKLAIAARADYVGDYIADELLEKLNKRVEEIRRKYPKPPKKKKKEKPKAKKKEKKGKKEKSKKKKDKKKDKKGKKERKVIGKTKSRK</sequence>
<reference key="1">
    <citation type="journal article" date="1996" name="Science">
        <title>Complete genome sequence of the methanogenic archaeon, Methanococcus jannaschii.</title>
        <authorList>
            <person name="Bult C.J."/>
            <person name="White O."/>
            <person name="Olsen G.J."/>
            <person name="Zhou L."/>
            <person name="Fleischmann R.D."/>
            <person name="Sutton G.G."/>
            <person name="Blake J.A."/>
            <person name="FitzGerald L.M."/>
            <person name="Clayton R.A."/>
            <person name="Gocayne J.D."/>
            <person name="Kerlavage A.R."/>
            <person name="Dougherty B.A."/>
            <person name="Tomb J.-F."/>
            <person name="Adams M.D."/>
            <person name="Reich C.I."/>
            <person name="Overbeek R."/>
            <person name="Kirkness E.F."/>
            <person name="Weinstock K.G."/>
            <person name="Merrick J.M."/>
            <person name="Glodek A."/>
            <person name="Scott J.L."/>
            <person name="Geoghagen N.S.M."/>
            <person name="Weidman J.F."/>
            <person name="Fuhrmann J.L."/>
            <person name="Nguyen D."/>
            <person name="Utterback T.R."/>
            <person name="Kelley J.M."/>
            <person name="Peterson J.D."/>
            <person name="Sadow P.W."/>
            <person name="Hanna M.C."/>
            <person name="Cotton M.D."/>
            <person name="Roberts K.M."/>
            <person name="Hurst M.A."/>
            <person name="Kaine B.P."/>
            <person name="Borodovsky M."/>
            <person name="Klenk H.-P."/>
            <person name="Fraser C.M."/>
            <person name="Smith H.O."/>
            <person name="Woese C.R."/>
            <person name="Venter J.C."/>
        </authorList>
    </citation>
    <scope>NUCLEOTIDE SEQUENCE [LARGE SCALE GENOMIC DNA]</scope>
    <source>
        <strain>ATCC 43067 / DSM 2661 / JAL-1 / JCM 10045 / NBRC 100440</strain>
    </source>
</reference>
<name>Y694_METJA</name>
<protein>
    <recommendedName>
        <fullName>Uncharacterized NOP5 family protein MJ0694</fullName>
    </recommendedName>
</protein>
<proteinExistence type="evidence at protein level"/>
<gene>
    <name type="ordered locus">MJ0694</name>
</gene>